<reference key="1">
    <citation type="journal article" date="2002" name="J. Mol. Microbiol. Biotechnol.">
        <title>The genome of Methanosarcina mazei: evidence for lateral gene transfer between Bacteria and Archaea.</title>
        <authorList>
            <person name="Deppenmeier U."/>
            <person name="Johann A."/>
            <person name="Hartsch T."/>
            <person name="Merkl R."/>
            <person name="Schmitz R.A."/>
            <person name="Martinez-Arias R."/>
            <person name="Henne A."/>
            <person name="Wiezer A."/>
            <person name="Baeumer S."/>
            <person name="Jacobi C."/>
            <person name="Brueggemann H."/>
            <person name="Lienard T."/>
            <person name="Christmann A."/>
            <person name="Boemecke M."/>
            <person name="Steckel S."/>
            <person name="Bhattacharyya A."/>
            <person name="Lykidis A."/>
            <person name="Overbeek R."/>
            <person name="Klenk H.-P."/>
            <person name="Gunsalus R.P."/>
            <person name="Fritz H.-J."/>
            <person name="Gottschalk G."/>
        </authorList>
    </citation>
    <scope>NUCLEOTIDE SEQUENCE [LARGE SCALE GENOMIC DNA]</scope>
    <source>
        <strain>ATCC BAA-159 / DSM 3647 / Goe1 / Go1 / JCM 11833 / OCM 88</strain>
    </source>
</reference>
<sequence>MKIMIFICGEGLGHTSRCLALGKELLAAGHEIEFGAYGYSRDLVEKTGYRIHEIPSEIKLVGKAGGFDLSGSIEATLKNARILGGPKVLKLIKDFKPDVVVSDSYYLGTLAAMLLNIPVYLIINQSNMEDFFKNRGVPIRLLGDLTKKFYREVFEKTDKIIIPDYPLPYTVCRKNLNFSPGLWEKLYYSGPLVKEKYEEVEQIPLKKPHIVSLIGGFGYREPIFRKVLTTAALDSGINYTLISGPSLDPSKFKEIPKNVQILRFVGDTFPYIRSSDAVIAPGGHSTMMEALSFGTPILSFPDEGHSEQENNAAVIEEEGYGRMLSYSTPPEVILECIREVLEDKKYRDKVKRLQRLASELDGPKAVRELLEKEAGKKVS</sequence>
<comment type="similarity">
    <text evidence="1">Belongs to the glycosyltransferase 28 family.</text>
</comment>
<name>Y1636_METMA</name>
<proteinExistence type="inferred from homology"/>
<keyword id="KW-0328">Glycosyltransferase</keyword>
<keyword id="KW-0808">Transferase</keyword>
<dbReference type="EC" id="2.4.-.-"/>
<dbReference type="EMBL" id="AE008384">
    <property type="protein sequence ID" value="AAM31332.1"/>
    <property type="molecule type" value="Genomic_DNA"/>
</dbReference>
<dbReference type="RefSeq" id="WP_011033579.1">
    <property type="nucleotide sequence ID" value="NC_003901.1"/>
</dbReference>
<dbReference type="SMR" id="Q8PWF3"/>
<dbReference type="CAZy" id="GT1">
    <property type="family name" value="Glycosyltransferase Family 1"/>
</dbReference>
<dbReference type="KEGG" id="mma:MM_1636"/>
<dbReference type="PATRIC" id="fig|192952.21.peg.1896"/>
<dbReference type="eggNOG" id="arCOG01393">
    <property type="taxonomic scope" value="Archaea"/>
</dbReference>
<dbReference type="HOGENOM" id="CLU_060247_0_0_2"/>
<dbReference type="Proteomes" id="UP000000595">
    <property type="component" value="Chromosome"/>
</dbReference>
<dbReference type="GO" id="GO:0016758">
    <property type="term" value="F:hexosyltransferase activity"/>
    <property type="evidence" value="ECO:0007669"/>
    <property type="project" value="InterPro"/>
</dbReference>
<dbReference type="CDD" id="cd03785">
    <property type="entry name" value="GT28_MurG"/>
    <property type="match status" value="1"/>
</dbReference>
<dbReference type="Gene3D" id="3.40.50.2000">
    <property type="entry name" value="Glycogen Phosphorylase B"/>
    <property type="match status" value="2"/>
</dbReference>
<dbReference type="InterPro" id="IPR007235">
    <property type="entry name" value="Glyco_trans_28_C"/>
</dbReference>
<dbReference type="PANTHER" id="PTHR21015:SF22">
    <property type="entry name" value="GLYCOSYLTRANSFERASE"/>
    <property type="match status" value="1"/>
</dbReference>
<dbReference type="PANTHER" id="PTHR21015">
    <property type="entry name" value="UDP-N-ACETYLGLUCOSAMINE--N-ACETYLMURAMYL-(PENTAPEPTIDE) PYROPHOSPHORYL-UNDECAPRENOL N-ACETYLGLUCOSAMINE TRANSFERASE 1"/>
    <property type="match status" value="1"/>
</dbReference>
<dbReference type="Pfam" id="PF04101">
    <property type="entry name" value="Glyco_tran_28_C"/>
    <property type="match status" value="1"/>
</dbReference>
<dbReference type="Pfam" id="PF13528">
    <property type="entry name" value="Glyco_trans_1_3"/>
    <property type="match status" value="1"/>
</dbReference>
<dbReference type="SUPFAM" id="SSF53756">
    <property type="entry name" value="UDP-Glycosyltransferase/glycogen phosphorylase"/>
    <property type="match status" value="1"/>
</dbReference>
<gene>
    <name type="ordered locus">MM_1636</name>
</gene>
<accession>Q8PWF3</accession>
<organism>
    <name type="scientific">Methanosarcina mazei (strain ATCC BAA-159 / DSM 3647 / Goe1 / Go1 / JCM 11833 / OCM 88)</name>
    <name type="common">Methanosarcina frisia</name>
    <dbReference type="NCBI Taxonomy" id="192952"/>
    <lineage>
        <taxon>Archaea</taxon>
        <taxon>Methanobacteriati</taxon>
        <taxon>Methanobacteriota</taxon>
        <taxon>Stenosarchaea group</taxon>
        <taxon>Methanomicrobia</taxon>
        <taxon>Methanosarcinales</taxon>
        <taxon>Methanosarcinaceae</taxon>
        <taxon>Methanosarcina</taxon>
    </lineage>
</organism>
<protein>
    <recommendedName>
        <fullName>Uncharacterized glycosyltransferase MM_1636</fullName>
        <ecNumber>2.4.-.-</ecNumber>
    </recommendedName>
</protein>
<feature type="chain" id="PRO_0000215622" description="Uncharacterized glycosyltransferase MM_1636">
    <location>
        <begin position="1"/>
        <end position="379"/>
    </location>
</feature>
<evidence type="ECO:0000305" key="1"/>